<reference key="1">
    <citation type="journal article" date="2008" name="J. Bacteriol.">
        <title>Comparative genome sequence analysis of multidrug-resistant Acinetobacter baumannii.</title>
        <authorList>
            <person name="Adams M.D."/>
            <person name="Goglin K."/>
            <person name="Molyneaux N."/>
            <person name="Hujer K.M."/>
            <person name="Lavender H."/>
            <person name="Jamison J.J."/>
            <person name="MacDonald I.J."/>
            <person name="Martin K.M."/>
            <person name="Russo T."/>
            <person name="Campagnari A.A."/>
            <person name="Hujer A.M."/>
            <person name="Bonomo R.A."/>
            <person name="Gill S.R."/>
        </authorList>
    </citation>
    <scope>NUCLEOTIDE SEQUENCE [LARGE SCALE GENOMIC DNA]</scope>
    <source>
        <strain>AB307-0294</strain>
    </source>
</reference>
<organism>
    <name type="scientific">Acinetobacter baumannii (strain AB307-0294)</name>
    <dbReference type="NCBI Taxonomy" id="557600"/>
    <lineage>
        <taxon>Bacteria</taxon>
        <taxon>Pseudomonadati</taxon>
        <taxon>Pseudomonadota</taxon>
        <taxon>Gammaproteobacteria</taxon>
        <taxon>Moraxellales</taxon>
        <taxon>Moraxellaceae</taxon>
        <taxon>Acinetobacter</taxon>
        <taxon>Acinetobacter calcoaceticus/baumannii complex</taxon>
    </lineage>
</organism>
<gene>
    <name evidence="1" type="primary">rimP</name>
    <name type="ordered locus">ABBFA_003201</name>
</gene>
<feature type="chain" id="PRO_1000136721" description="Ribosome maturation factor RimP">
    <location>
        <begin position="1"/>
        <end position="174"/>
    </location>
</feature>
<dbReference type="EMBL" id="CP001172">
    <property type="protein sequence ID" value="ACJ58449.1"/>
    <property type="molecule type" value="Genomic_DNA"/>
</dbReference>
<dbReference type="RefSeq" id="WP_000777730.1">
    <property type="nucleotide sequence ID" value="NZ_CP001172.1"/>
</dbReference>
<dbReference type="SMR" id="B7H117"/>
<dbReference type="GeneID" id="92892329"/>
<dbReference type="HOGENOM" id="CLU_070525_1_1_6"/>
<dbReference type="Proteomes" id="UP000006924">
    <property type="component" value="Chromosome"/>
</dbReference>
<dbReference type="GO" id="GO:0005829">
    <property type="term" value="C:cytosol"/>
    <property type="evidence" value="ECO:0007669"/>
    <property type="project" value="TreeGrafter"/>
</dbReference>
<dbReference type="GO" id="GO:0000028">
    <property type="term" value="P:ribosomal small subunit assembly"/>
    <property type="evidence" value="ECO:0007669"/>
    <property type="project" value="TreeGrafter"/>
</dbReference>
<dbReference type="GO" id="GO:0006412">
    <property type="term" value="P:translation"/>
    <property type="evidence" value="ECO:0007669"/>
    <property type="project" value="TreeGrafter"/>
</dbReference>
<dbReference type="CDD" id="cd01734">
    <property type="entry name" value="YlxS_C"/>
    <property type="match status" value="1"/>
</dbReference>
<dbReference type="FunFam" id="3.30.300.70:FF:000001">
    <property type="entry name" value="Ribosome maturation factor RimP"/>
    <property type="match status" value="1"/>
</dbReference>
<dbReference type="Gene3D" id="2.30.30.180">
    <property type="entry name" value="Ribosome maturation factor RimP, C-terminal domain"/>
    <property type="match status" value="1"/>
</dbReference>
<dbReference type="Gene3D" id="3.30.300.70">
    <property type="entry name" value="RimP-like superfamily, N-terminal"/>
    <property type="match status" value="1"/>
</dbReference>
<dbReference type="HAMAP" id="MF_01077">
    <property type="entry name" value="RimP"/>
    <property type="match status" value="1"/>
</dbReference>
<dbReference type="InterPro" id="IPR003728">
    <property type="entry name" value="Ribosome_maturation_RimP"/>
</dbReference>
<dbReference type="InterPro" id="IPR028998">
    <property type="entry name" value="RimP_C"/>
</dbReference>
<dbReference type="InterPro" id="IPR036847">
    <property type="entry name" value="RimP_C_sf"/>
</dbReference>
<dbReference type="InterPro" id="IPR028989">
    <property type="entry name" value="RimP_N"/>
</dbReference>
<dbReference type="InterPro" id="IPR035956">
    <property type="entry name" value="RimP_N_sf"/>
</dbReference>
<dbReference type="NCBIfam" id="NF011224">
    <property type="entry name" value="PRK14631.1"/>
    <property type="match status" value="1"/>
</dbReference>
<dbReference type="PANTHER" id="PTHR33867">
    <property type="entry name" value="RIBOSOME MATURATION FACTOR RIMP"/>
    <property type="match status" value="1"/>
</dbReference>
<dbReference type="PANTHER" id="PTHR33867:SF1">
    <property type="entry name" value="RIBOSOME MATURATION FACTOR RIMP"/>
    <property type="match status" value="1"/>
</dbReference>
<dbReference type="Pfam" id="PF17384">
    <property type="entry name" value="DUF150_C"/>
    <property type="match status" value="1"/>
</dbReference>
<dbReference type="Pfam" id="PF02576">
    <property type="entry name" value="RimP_N"/>
    <property type="match status" value="1"/>
</dbReference>
<dbReference type="SUPFAM" id="SSF74942">
    <property type="entry name" value="YhbC-like, C-terminal domain"/>
    <property type="match status" value="1"/>
</dbReference>
<dbReference type="SUPFAM" id="SSF75420">
    <property type="entry name" value="YhbC-like, N-terminal domain"/>
    <property type="match status" value="1"/>
</dbReference>
<comment type="function">
    <text evidence="1">Required for maturation of 30S ribosomal subunits.</text>
</comment>
<comment type="subcellular location">
    <subcellularLocation>
        <location evidence="1">Cytoplasm</location>
    </subcellularLocation>
</comment>
<comment type="similarity">
    <text evidence="1">Belongs to the RimP family.</text>
</comment>
<evidence type="ECO:0000255" key="1">
    <source>
        <dbReference type="HAMAP-Rule" id="MF_01077"/>
    </source>
</evidence>
<accession>B7H117</accession>
<proteinExistence type="inferred from homology"/>
<keyword id="KW-0963">Cytoplasm</keyword>
<keyword id="KW-0690">Ribosome biogenesis</keyword>
<sequence>MKLSNKSQALYDMIAPAVEACGVDLWGIEFLPQGKRSLLRIYIDRPVDENAEPVINEDGEVEQGRGIGVEDCVRVTQQVGAMLDVHDPISGEYALEVSSPGWDRPFFQLEQLQGYIGQQVALRLIAAVENRRKFQAKLLAVDLENEEIQVEVEGKHVLDIDSNNIDKANLIYQD</sequence>
<name>RIMP_ACIB3</name>
<protein>
    <recommendedName>
        <fullName evidence="1">Ribosome maturation factor RimP</fullName>
    </recommendedName>
</protein>